<keyword id="KW-0067">ATP-binding</keyword>
<keyword id="KW-0315">Glutamine amidotransferase</keyword>
<keyword id="KW-0332">GMP biosynthesis</keyword>
<keyword id="KW-0436">Ligase</keyword>
<keyword id="KW-0547">Nucleotide-binding</keyword>
<keyword id="KW-0658">Purine biosynthesis</keyword>
<evidence type="ECO:0000255" key="1">
    <source>
        <dbReference type="HAMAP-Rule" id="MF_00344"/>
    </source>
</evidence>
<proteinExistence type="inferred from homology"/>
<gene>
    <name evidence="1" type="primary">guaA</name>
    <name type="ordered locus">BCB4264_A0300</name>
</gene>
<sequence>MKKQHDTIIVLDFGSQYNQLIARRIREFGVYSELHPHTITAEEIKAMNPKGIIFSGGPNSVYGEGALHCDEKIFELGLPIFGICYGMQLMTQHFGGKVERANHREYGKAVLKVENESKLYANLPEEQVVWMSHGDLVTGLPEGFVVDATSESCPIAGMSNEAKNLYGVQFHPEVRHSEHGNDLIKNFVFGVCGCSEGWNMENFIEVELEKIRETVGDKKVLCALSGGVDSSVVAVLIHKAIGDQLTCIFVDHGLLRKGEAEGVMKTFSEGFHMNVIKVDAKDRFMDKLKGVEDPEQKRKIIGNEFIYVFDDEASKLQGMDFLAQGTLYTDIVESGTATAQTIKSHHNVGGLPEDMQFKLIEPLNTLFKDEVRVLGSELGIPDEIVWRQPFPGPGLGIRVLGEITEEKLEIVRESDAILREEIIKAGLDREIWQYFTALPGMRSVGVMGDERTYDYTVGIRAVTSIDGMTADWARIPWDVLEKISVRIVNEVKHVNRIVYDVTSKPPATIEWE</sequence>
<protein>
    <recommendedName>
        <fullName evidence="1">GMP synthase [glutamine-hydrolyzing]</fullName>
        <ecNumber evidence="1">6.3.5.2</ecNumber>
    </recommendedName>
    <alternativeName>
        <fullName evidence="1">GMP synthetase</fullName>
    </alternativeName>
    <alternativeName>
        <fullName evidence="1">Glutamine amidotransferase</fullName>
    </alternativeName>
</protein>
<dbReference type="EC" id="6.3.5.2" evidence="1"/>
<dbReference type="EMBL" id="CP001176">
    <property type="protein sequence ID" value="ACK59144.1"/>
    <property type="molecule type" value="Genomic_DNA"/>
</dbReference>
<dbReference type="SMR" id="B7H4Q8"/>
<dbReference type="MEROPS" id="C26.957"/>
<dbReference type="KEGG" id="bcb:BCB4264_A0300"/>
<dbReference type="HOGENOM" id="CLU_014340_0_5_9"/>
<dbReference type="UniPathway" id="UPA00189">
    <property type="reaction ID" value="UER00296"/>
</dbReference>
<dbReference type="Proteomes" id="UP000007096">
    <property type="component" value="Chromosome"/>
</dbReference>
<dbReference type="GO" id="GO:0005829">
    <property type="term" value="C:cytosol"/>
    <property type="evidence" value="ECO:0007669"/>
    <property type="project" value="TreeGrafter"/>
</dbReference>
<dbReference type="GO" id="GO:0005524">
    <property type="term" value="F:ATP binding"/>
    <property type="evidence" value="ECO:0007669"/>
    <property type="project" value="UniProtKB-UniRule"/>
</dbReference>
<dbReference type="GO" id="GO:0003921">
    <property type="term" value="F:GMP synthase activity"/>
    <property type="evidence" value="ECO:0007669"/>
    <property type="project" value="InterPro"/>
</dbReference>
<dbReference type="CDD" id="cd01742">
    <property type="entry name" value="GATase1_GMP_Synthase"/>
    <property type="match status" value="1"/>
</dbReference>
<dbReference type="CDD" id="cd01997">
    <property type="entry name" value="GMP_synthase_C"/>
    <property type="match status" value="1"/>
</dbReference>
<dbReference type="FunFam" id="3.30.300.10:FF:000002">
    <property type="entry name" value="GMP synthase [glutamine-hydrolyzing]"/>
    <property type="match status" value="1"/>
</dbReference>
<dbReference type="FunFam" id="3.40.50.620:FF:000001">
    <property type="entry name" value="GMP synthase [glutamine-hydrolyzing]"/>
    <property type="match status" value="1"/>
</dbReference>
<dbReference type="FunFam" id="3.40.50.880:FF:000001">
    <property type="entry name" value="GMP synthase [glutamine-hydrolyzing]"/>
    <property type="match status" value="1"/>
</dbReference>
<dbReference type="Gene3D" id="3.30.300.10">
    <property type="match status" value="1"/>
</dbReference>
<dbReference type="Gene3D" id="3.40.50.880">
    <property type="match status" value="1"/>
</dbReference>
<dbReference type="Gene3D" id="3.40.50.620">
    <property type="entry name" value="HUPs"/>
    <property type="match status" value="1"/>
</dbReference>
<dbReference type="HAMAP" id="MF_00344">
    <property type="entry name" value="GMP_synthase"/>
    <property type="match status" value="1"/>
</dbReference>
<dbReference type="InterPro" id="IPR029062">
    <property type="entry name" value="Class_I_gatase-like"/>
</dbReference>
<dbReference type="InterPro" id="IPR017926">
    <property type="entry name" value="GATASE"/>
</dbReference>
<dbReference type="InterPro" id="IPR001674">
    <property type="entry name" value="GMP_synth_C"/>
</dbReference>
<dbReference type="InterPro" id="IPR004739">
    <property type="entry name" value="GMP_synth_GATase"/>
</dbReference>
<dbReference type="InterPro" id="IPR022955">
    <property type="entry name" value="GMP_synthase"/>
</dbReference>
<dbReference type="InterPro" id="IPR025777">
    <property type="entry name" value="GMPS_ATP_PPase_dom"/>
</dbReference>
<dbReference type="InterPro" id="IPR022310">
    <property type="entry name" value="NAD/GMP_synthase"/>
</dbReference>
<dbReference type="InterPro" id="IPR014729">
    <property type="entry name" value="Rossmann-like_a/b/a_fold"/>
</dbReference>
<dbReference type="NCBIfam" id="TIGR00884">
    <property type="entry name" value="guaA_Cterm"/>
    <property type="match status" value="1"/>
</dbReference>
<dbReference type="NCBIfam" id="TIGR00888">
    <property type="entry name" value="guaA_Nterm"/>
    <property type="match status" value="1"/>
</dbReference>
<dbReference type="NCBIfam" id="NF000848">
    <property type="entry name" value="PRK00074.1"/>
    <property type="match status" value="1"/>
</dbReference>
<dbReference type="PANTHER" id="PTHR11922:SF2">
    <property type="entry name" value="GMP SYNTHASE [GLUTAMINE-HYDROLYZING]"/>
    <property type="match status" value="1"/>
</dbReference>
<dbReference type="PANTHER" id="PTHR11922">
    <property type="entry name" value="GMP SYNTHASE-RELATED"/>
    <property type="match status" value="1"/>
</dbReference>
<dbReference type="Pfam" id="PF00117">
    <property type="entry name" value="GATase"/>
    <property type="match status" value="1"/>
</dbReference>
<dbReference type="Pfam" id="PF00958">
    <property type="entry name" value="GMP_synt_C"/>
    <property type="match status" value="1"/>
</dbReference>
<dbReference type="Pfam" id="PF02540">
    <property type="entry name" value="NAD_synthase"/>
    <property type="match status" value="1"/>
</dbReference>
<dbReference type="PRINTS" id="PR00097">
    <property type="entry name" value="ANTSNTHASEII"/>
</dbReference>
<dbReference type="PRINTS" id="PR00099">
    <property type="entry name" value="CPSGATASE"/>
</dbReference>
<dbReference type="PRINTS" id="PR00096">
    <property type="entry name" value="GATASE"/>
</dbReference>
<dbReference type="SUPFAM" id="SSF52402">
    <property type="entry name" value="Adenine nucleotide alpha hydrolases-like"/>
    <property type="match status" value="1"/>
</dbReference>
<dbReference type="SUPFAM" id="SSF52317">
    <property type="entry name" value="Class I glutamine amidotransferase-like"/>
    <property type="match status" value="1"/>
</dbReference>
<dbReference type="SUPFAM" id="SSF54810">
    <property type="entry name" value="GMP synthetase C-terminal dimerisation domain"/>
    <property type="match status" value="1"/>
</dbReference>
<dbReference type="PROSITE" id="PS51273">
    <property type="entry name" value="GATASE_TYPE_1"/>
    <property type="match status" value="1"/>
</dbReference>
<dbReference type="PROSITE" id="PS51553">
    <property type="entry name" value="GMPS_ATP_PPASE"/>
    <property type="match status" value="1"/>
</dbReference>
<organism>
    <name type="scientific">Bacillus cereus (strain B4264)</name>
    <dbReference type="NCBI Taxonomy" id="405532"/>
    <lineage>
        <taxon>Bacteria</taxon>
        <taxon>Bacillati</taxon>
        <taxon>Bacillota</taxon>
        <taxon>Bacilli</taxon>
        <taxon>Bacillales</taxon>
        <taxon>Bacillaceae</taxon>
        <taxon>Bacillus</taxon>
        <taxon>Bacillus cereus group</taxon>
    </lineage>
</organism>
<accession>B7H4Q8</accession>
<name>GUAA_BACC4</name>
<feature type="chain" id="PRO_1000120215" description="GMP synthase [glutamine-hydrolyzing]">
    <location>
        <begin position="1"/>
        <end position="512"/>
    </location>
</feature>
<feature type="domain" description="Glutamine amidotransferase type-1" evidence="1">
    <location>
        <begin position="7"/>
        <end position="197"/>
    </location>
</feature>
<feature type="domain" description="GMPS ATP-PPase" evidence="1">
    <location>
        <begin position="198"/>
        <end position="387"/>
    </location>
</feature>
<feature type="active site" description="Nucleophile" evidence="1">
    <location>
        <position position="84"/>
    </location>
</feature>
<feature type="active site" evidence="1">
    <location>
        <position position="171"/>
    </location>
</feature>
<feature type="active site" evidence="1">
    <location>
        <position position="173"/>
    </location>
</feature>
<feature type="binding site" evidence="1">
    <location>
        <begin position="225"/>
        <end position="231"/>
    </location>
    <ligand>
        <name>ATP</name>
        <dbReference type="ChEBI" id="CHEBI:30616"/>
    </ligand>
</feature>
<comment type="function">
    <text evidence="1">Catalyzes the synthesis of GMP from XMP.</text>
</comment>
<comment type="catalytic activity">
    <reaction evidence="1">
        <text>XMP + L-glutamine + ATP + H2O = GMP + L-glutamate + AMP + diphosphate + 2 H(+)</text>
        <dbReference type="Rhea" id="RHEA:11680"/>
        <dbReference type="ChEBI" id="CHEBI:15377"/>
        <dbReference type="ChEBI" id="CHEBI:15378"/>
        <dbReference type="ChEBI" id="CHEBI:29985"/>
        <dbReference type="ChEBI" id="CHEBI:30616"/>
        <dbReference type="ChEBI" id="CHEBI:33019"/>
        <dbReference type="ChEBI" id="CHEBI:57464"/>
        <dbReference type="ChEBI" id="CHEBI:58115"/>
        <dbReference type="ChEBI" id="CHEBI:58359"/>
        <dbReference type="ChEBI" id="CHEBI:456215"/>
        <dbReference type="EC" id="6.3.5.2"/>
    </reaction>
</comment>
<comment type="pathway">
    <text evidence="1">Purine metabolism; GMP biosynthesis; GMP from XMP (L-Gln route): step 1/1.</text>
</comment>
<comment type="subunit">
    <text evidence="1">Homodimer.</text>
</comment>
<reference key="1">
    <citation type="submission" date="2008-10" db="EMBL/GenBank/DDBJ databases">
        <title>Genome sequence of Bacillus cereus B4264.</title>
        <authorList>
            <person name="Dodson R.J."/>
            <person name="Durkin A.S."/>
            <person name="Rosovitz M.J."/>
            <person name="Rasko D.A."/>
            <person name="Hoffmaster A."/>
            <person name="Ravel J."/>
            <person name="Sutton G."/>
        </authorList>
    </citation>
    <scope>NUCLEOTIDE SEQUENCE [LARGE SCALE GENOMIC DNA]</scope>
    <source>
        <strain>B4264</strain>
    </source>
</reference>